<protein>
    <recommendedName>
        <fullName evidence="15">Small ribosomal subunit protein uS7</fullName>
    </recommendedName>
    <alternativeName>
        <fullName>40S ribosomal protein S5</fullName>
    </alternativeName>
</protein>
<keyword id="KW-0002">3D-structure</keyword>
<keyword id="KW-0007">Acetylation</keyword>
<keyword id="KW-0963">Cytoplasm</keyword>
<keyword id="KW-1017">Isopeptide bond</keyword>
<keyword id="KW-0539">Nucleus</keyword>
<keyword id="KW-0597">Phosphoprotein</keyword>
<keyword id="KW-1185">Reference proteome</keyword>
<keyword id="KW-0687">Ribonucleoprotein</keyword>
<keyword id="KW-0689">Ribosomal protein</keyword>
<keyword id="KW-0832">Ubl conjugation</keyword>
<comment type="function">
    <text evidence="1 2 3 5 9">Component of the small ribosomal subunit (PubMed:23873042, PubMed:25601755, PubMed:27863242, PubMed:30517857). The ribosome is a large ribonucleoprotein complex responsible for the synthesis of proteins in the cell (PubMed:23873042, PubMed:25601755, PubMed:27863242, PubMed:30517857). Part of the small subunit (SSU) processome, first precursor of the small eukaryotic ribosomal subunit (PubMed:23873042, PubMed:25601755, PubMed:27863242, PubMed:30517857). During the assembly of the SSU processome in the nucleolus, many ribosome biogenesis factors, an RNA chaperone and ribosomal proteins associate with the nascent pre-rRNA and work in concert to generate RNA folding, modifications, rearrangements and cleavage as well as targeted degradation of pre-ribosomal RNA by the RNA exosome (By similarity).</text>
</comment>
<comment type="subunit">
    <text evidence="2 3 4 5 6 7 8 9 10 11 12 13 14">Component of the small ribosomal subunit. Part of the small subunit (SSU) processome, composed of more than 70 proteins and the RNA chaperone small nucleolar RNA (snoRNA) U3.</text>
</comment>
<comment type="subcellular location">
    <subcellularLocation>
        <location evidence="2 3 4 5 6 7 8 9 10 11 12 13 14">Cytoplasm</location>
    </subcellularLocation>
    <subcellularLocation>
        <location evidence="1">Nucleus</location>
        <location evidence="1">Nucleolus</location>
    </subcellularLocation>
</comment>
<comment type="similarity">
    <text evidence="15">Belongs to the universal ribosomal protein uS7 family.</text>
</comment>
<feature type="chain" id="PRO_0000460055" description="Small ribosomal subunit protein uS7">
    <location>
        <begin position="1"/>
        <end position="204"/>
    </location>
</feature>
<feature type="modified residue" description="N-acetylmethionine; in 40S ribosomal protein S5; alternate" evidence="1">
    <location>
        <position position="1"/>
    </location>
</feature>
<feature type="modified residue" description="Phosphothreonine" evidence="1">
    <location>
        <position position="14"/>
    </location>
</feature>
<feature type="modified residue" description="N6-acetyllysine; alternate" evidence="1">
    <location>
        <position position="47"/>
    </location>
</feature>
<feature type="modified residue" description="Phosphoserine" evidence="1">
    <location>
        <position position="142"/>
    </location>
</feature>
<feature type="cross-link" description="Glycyl lysine isopeptide (Lys-Gly) (interchain with G-Cter in SUMO2); alternate" evidence="1">
    <location>
        <position position="47"/>
    </location>
</feature>
<feature type="strand" evidence="41">
    <location>
        <begin position="20"/>
        <end position="22"/>
    </location>
</feature>
<feature type="strand" evidence="40">
    <location>
        <begin position="25"/>
        <end position="27"/>
    </location>
</feature>
<feature type="helix" evidence="41">
    <location>
        <begin position="33"/>
        <end position="35"/>
    </location>
</feature>
<feature type="turn" evidence="39">
    <location>
        <begin position="36"/>
        <end position="38"/>
    </location>
</feature>
<feature type="strand" evidence="41">
    <location>
        <begin position="42"/>
        <end position="45"/>
    </location>
</feature>
<feature type="strand" evidence="39">
    <location>
        <begin position="48"/>
        <end position="50"/>
    </location>
</feature>
<feature type="strand" evidence="41">
    <location>
        <begin position="57"/>
        <end position="61"/>
    </location>
</feature>
<feature type="helix" evidence="41">
    <location>
        <begin position="62"/>
        <end position="64"/>
    </location>
</feature>
<feature type="helix" evidence="41">
    <location>
        <begin position="68"/>
        <end position="74"/>
    </location>
</feature>
<feature type="turn" evidence="41">
    <location>
        <begin position="81"/>
        <end position="84"/>
    </location>
</feature>
<feature type="helix" evidence="41">
    <location>
        <begin position="87"/>
        <end position="104"/>
    </location>
</feature>
<feature type="helix" evidence="41">
    <location>
        <begin position="108"/>
        <end position="119"/>
    </location>
</feature>
<feature type="strand" evidence="39">
    <location>
        <begin position="122"/>
        <end position="126"/>
    </location>
</feature>
<feature type="strand" evidence="39">
    <location>
        <begin position="137"/>
        <end position="141"/>
    </location>
</feature>
<feature type="helix" evidence="41">
    <location>
        <begin position="145"/>
        <end position="155"/>
    </location>
</feature>
<feature type="turn" evidence="41">
    <location>
        <begin position="159"/>
        <end position="164"/>
    </location>
</feature>
<feature type="strand" evidence="41">
    <location>
        <begin position="165"/>
        <end position="167"/>
    </location>
</feature>
<feature type="helix" evidence="41">
    <location>
        <begin position="169"/>
        <end position="181"/>
    </location>
</feature>
<feature type="helix" evidence="41">
    <location>
        <begin position="188"/>
        <end position="191"/>
    </location>
</feature>
<feature type="helix" evidence="41">
    <location>
        <begin position="193"/>
        <end position="199"/>
    </location>
</feature>
<feature type="turn" evidence="41">
    <location>
        <begin position="200"/>
        <end position="203"/>
    </location>
</feature>
<reference key="1">
    <citation type="journal article" date="2011" name="Nature">
        <title>A high-resolution map of human evolutionary constraint using 29 mammals.</title>
        <authorList>
            <person name="Lindblad-Toh K."/>
            <person name="Garber M."/>
            <person name="Zuk O."/>
            <person name="Lin M.F."/>
            <person name="Parker B.J."/>
            <person name="Washietl S."/>
            <person name="Kheradpour P."/>
            <person name="Ernst J."/>
            <person name="Jordan G."/>
            <person name="Mauceli E."/>
            <person name="Ward L.D."/>
            <person name="Lowe C.B."/>
            <person name="Holloway A.K."/>
            <person name="Clamp M."/>
            <person name="Gnerre S."/>
            <person name="Alfoldi J."/>
            <person name="Beal K."/>
            <person name="Chang J."/>
            <person name="Clawson H."/>
            <person name="Cuff J."/>
            <person name="Di Palma F."/>
            <person name="Fitzgerald S."/>
            <person name="Flicek P."/>
            <person name="Guttman M."/>
            <person name="Hubisz M.J."/>
            <person name="Jaffe D.B."/>
            <person name="Jungreis I."/>
            <person name="Kent W.J."/>
            <person name="Kostka D."/>
            <person name="Lara M."/>
            <person name="Martins A.L."/>
            <person name="Massingham T."/>
            <person name="Moltke I."/>
            <person name="Raney B.J."/>
            <person name="Rasmussen M.D."/>
            <person name="Robinson J."/>
            <person name="Stark A."/>
            <person name="Vilella A.J."/>
            <person name="Wen J."/>
            <person name="Xie X."/>
            <person name="Zody M.C."/>
            <person name="Baldwin J."/>
            <person name="Bloom T."/>
            <person name="Chin C.W."/>
            <person name="Heiman D."/>
            <person name="Nicol R."/>
            <person name="Nusbaum C."/>
            <person name="Young S."/>
            <person name="Wilkinson J."/>
            <person name="Worley K.C."/>
            <person name="Kovar C.L."/>
            <person name="Muzny D.M."/>
            <person name="Gibbs R.A."/>
            <person name="Cree A."/>
            <person name="Dihn H.H."/>
            <person name="Fowler G."/>
            <person name="Jhangiani S."/>
            <person name="Joshi V."/>
            <person name="Lee S."/>
            <person name="Lewis L.R."/>
            <person name="Nazareth L.V."/>
            <person name="Okwuonu G."/>
            <person name="Santibanez J."/>
            <person name="Warren W.C."/>
            <person name="Mardis E.R."/>
            <person name="Weinstock G.M."/>
            <person name="Wilson R.K."/>
            <person name="Delehaunty K."/>
            <person name="Dooling D."/>
            <person name="Fronik C."/>
            <person name="Fulton L."/>
            <person name="Fulton B."/>
            <person name="Graves T."/>
            <person name="Minx P."/>
            <person name="Sodergren E."/>
            <person name="Birney E."/>
            <person name="Margulies E.H."/>
            <person name="Herrero J."/>
            <person name="Green E.D."/>
            <person name="Haussler D."/>
            <person name="Siepel A."/>
            <person name="Goldman N."/>
            <person name="Pollard K.S."/>
            <person name="Pedersen J.S."/>
            <person name="Lander E.S."/>
            <person name="Kellis M."/>
        </authorList>
    </citation>
    <scope>NUCLEOTIDE SEQUENCE [LARGE SCALE GENOMIC DNA]</scope>
    <source>
        <strain>Thorbecke</strain>
    </source>
</reference>
<reference evidence="20 21" key="2">
    <citation type="journal article" date="2013" name="Nature">
        <title>The initiation of mammalian protein synthesis and mRNA scanning mechanism.</title>
        <authorList>
            <person name="Lomakin I.B."/>
            <person name="Steitz T.A."/>
        </authorList>
    </citation>
    <scope>X-RAY CRYSTALLOGRAPHY (7.01 ANGSTROMS) OF 40S RIBOSOME</scope>
    <scope>FUNCTION</scope>
    <scope>SUBUNIT</scope>
    <scope>SUBCELLULAR LOCATION</scope>
</reference>
<reference evidence="18 19" key="3">
    <citation type="journal article" date="2015" name="Mol. Cell">
        <title>Cryo-EM of ribosomal 80S complexes with termination factors reveals the translocated cricket paralysis virus IRES.</title>
        <authorList>
            <person name="Muhs M."/>
            <person name="Hilal T."/>
            <person name="Mielke T."/>
            <person name="Skabkin M.A."/>
            <person name="Sanbonmatsu K.Y."/>
            <person name="Pestova T.V."/>
            <person name="Spahn C.M."/>
        </authorList>
    </citation>
    <scope>STRUCTURE BY ELECTRON MICROSCOPY (9.00 ANGSTROMS) OF RIBOSOME</scope>
    <scope>FUNCTION</scope>
    <scope>SUBUNIT</scope>
    <scope>SUBCELLULAR LOCATION</scope>
</reference>
<reference evidence="16 17" key="4">
    <citation type="journal article" date="2015" name="Nature">
        <title>Structural basis for stop codon recognition in eukaryotes.</title>
        <authorList>
            <person name="Brown A."/>
            <person name="Shao S."/>
            <person name="Murray J."/>
            <person name="Hegde R.S."/>
            <person name="Ramakrishnan V."/>
        </authorList>
    </citation>
    <scope>STRUCTURE BY ELECTRON MICROSCOPY (3.45 ANGSTROMS) OF 14-204 OF RIBOSOME</scope>
    <scope>SUBUNIT</scope>
    <scope>SUBCELLULAR LOCATION</scope>
</reference>
<reference evidence="22 23" key="5">
    <citation type="journal article" date="2016" name="Cell">
        <title>Decoding mammalian ribosome-mRNA states by translational GTPase complexes.</title>
        <authorList>
            <person name="Shao S."/>
            <person name="Murray J."/>
            <person name="Brown A."/>
            <person name="Taunton J."/>
            <person name="Ramakrishnan V."/>
            <person name="Hegde R.S."/>
        </authorList>
    </citation>
    <scope>STRUCTURE BY ELECTRON MICROSCOPY (3.31 ANGSTROMS) OF RIBOSOME</scope>
    <scope>FUNCTION</scope>
    <scope>SUBUNIT</scope>
    <scope>SUBCELLULAR LOCATION</scope>
</reference>
<reference evidence="26" key="6">
    <citation type="journal article" date="2018" name="Cell Rep.">
        <title>tRNA translocation by the eukaryotic 80S ribosome and the impact of GTP hydrolysis.</title>
        <authorList>
            <person name="Flis J."/>
            <person name="Holm M."/>
            <person name="Rundlet E.J."/>
            <person name="Loerke J."/>
            <person name="Hilal T."/>
            <person name="Dabrowski M."/>
            <person name="Burger J."/>
            <person name="Mielke T."/>
            <person name="Blanchard S.C."/>
            <person name="Spahn C.M.T."/>
            <person name="Budkevich T.V."/>
        </authorList>
    </citation>
    <scope>STRUCTURE BY ELECTRON MICROSCOPY (3.60 ANGSTROMS) OF 15-204 OF RIBOSOME</scope>
    <scope>FUNCTION</scope>
    <scope>SUBUNIT</scope>
    <scope>SUBCELLULAR LOCATION</scope>
</reference>
<reference evidence="24 25" key="7">
    <citation type="journal article" date="2018" name="Elife">
        <title>Dual tRNA mimicry in the Cricket paralysis virus IRES uncovers an unexpected similarity with the Hepatitis C Virus IRES.</title>
        <authorList>
            <person name="Pisareva V.P."/>
            <person name="Pisarev A.V."/>
            <person name="Fernandez I.S."/>
        </authorList>
    </citation>
    <scope>STRUCTURE BY ELECTRON MICROSCOPY (3.20 ANGSTROMS) OF RIBOSOME</scope>
    <scope>SUBUNIT</scope>
    <scope>SUBCELLULAR LOCATION</scope>
</reference>
<reference evidence="29 30" key="8">
    <citation type="journal article" date="2018" name="Elife">
        <title>Structures of translationally inactive mammalian ribosomes.</title>
        <authorList>
            <person name="Brown A."/>
            <person name="Baird M.R."/>
            <person name="Yip M.C."/>
            <person name="Murray J."/>
            <person name="Shao S."/>
        </authorList>
    </citation>
    <scope>STRUCTURE BY ELECTRON MICROSCOPY (3.30 ANGSTROMS) OF RIBOSOME</scope>
    <scope>SUBUNIT</scope>
    <scope>SUBCELLULAR LOCATION</scope>
</reference>
<reference evidence="27 28" key="9">
    <citation type="journal article" date="2018" name="Mol. Cell">
        <title>ZNF598 is a quality control sensor of collided ribosomes.</title>
        <authorList>
            <person name="Juszkiewicz S."/>
            <person name="Chandrasekaran V."/>
            <person name="Lin Z."/>
            <person name="Kraatz S."/>
            <person name="Ramakrishnan V."/>
            <person name="Hegde R.S."/>
        </authorList>
    </citation>
    <scope>STRUCTURE BY ELECTRON MICROSCOPY (3.80 ANGSTROMS) OF RIBOSOME</scope>
    <scope>SUBUNIT</scope>
    <scope>SUBCELLULAR LOCATION</scope>
</reference>
<reference evidence="33 34" key="10">
    <citation type="journal article" date="2019" name="Elife">
        <title>Structural and mutational analysis of the ribosome-arresting human XBP1u.</title>
        <authorList>
            <person name="Shanmuganathan V."/>
            <person name="Schiller N."/>
            <person name="Magoulopoulou A."/>
            <person name="Cheng J."/>
            <person name="Braunger K."/>
            <person name="Cymer F."/>
            <person name="Berninghausen O."/>
            <person name="Beatrix B."/>
            <person name="Kohno K."/>
            <person name="von Heijne G."/>
            <person name="Beckmann R."/>
        </authorList>
    </citation>
    <scope>STRUCTURE BY ELECTRON MICROSCOPY (3.00 ANGSTROMS) OF 14-204 OF RIBOSOME</scope>
    <scope>SUBUNIT</scope>
    <scope>SUBCELLULAR LOCATION</scope>
</reference>
<reference evidence="31 32" key="11">
    <citation type="journal article" date="2019" name="EMBO J.">
        <title>The Israeli acute paralysis virus IRES captures host ribosomes by mimicking a ribosomal state with hybrid tRNAs.</title>
        <authorList>
            <person name="Acosta-Reyes F."/>
            <person name="Neupane R."/>
            <person name="Frank J."/>
            <person name="Fernandez I.S."/>
        </authorList>
    </citation>
    <scope>STRUCTURE BY ELECTRON MICROSCOPY (3.10 ANGSTROMS) OF RIBOSOME</scope>
    <scope>SUBUNIT</scope>
    <scope>SUBCELLULAR LOCATION</scope>
</reference>
<reference evidence="35" key="12">
    <citation type="journal article" date="2019" name="Nat. Struct. Mol. Biol.">
        <title>Mechanism of ribosome stalling during translation of a poly(A) tail.</title>
        <authorList>
            <person name="Chandrasekaran V."/>
            <person name="Juszkiewicz S."/>
            <person name="Choi J."/>
            <person name="Puglisi J.D."/>
            <person name="Brown A."/>
            <person name="Shao S."/>
            <person name="Ramakrishnan V."/>
            <person name="Hegde R.S."/>
        </authorList>
    </citation>
    <scope>STRUCTURE BY ELECTRON MICROSCOPY (2.80 ANGSTROMS) OF RIBOSOME</scope>
    <scope>SUBUNIT</scope>
    <scope>SUBCELLULAR LOCATION</scope>
</reference>
<reference evidence="36 37" key="13">
    <citation type="journal article" date="2020" name="Elife">
        <title>A complex IRES at the 5'-UTR of a viral mRNA assembles a functional 48S complex via an uAUG intermediate.</title>
        <authorList>
            <person name="Neupane R."/>
            <person name="Pisareva V.P."/>
            <person name="Rodriguez C.F."/>
            <person name="Pisarev A.V."/>
            <person name="Fernandez I.S."/>
        </authorList>
    </citation>
    <scope>STRUCTURE BY ELECTRON MICROSCOPY (3.00 ANGSTROMS) OF RIBOSOME</scope>
    <scope>SUBUNIT</scope>
    <scope>SUBCELLULAR LOCATION</scope>
</reference>
<reference evidence="38" key="14">
    <citation type="journal article" date="2023" name="Nature">
        <title>A molecular network of conserved factors keeps ribosomes dormant in the egg.</title>
        <authorList>
            <person name="Leesch F."/>
            <person name="Lorenzo-Orts L."/>
            <person name="Pribitzer C."/>
            <person name="Grishkovskaya I."/>
            <person name="Roehsner J."/>
            <person name="Chugunova A."/>
            <person name="Matzinger M."/>
            <person name="Roitinger E."/>
            <person name="Belacic K."/>
            <person name="Kandolf S."/>
            <person name="Lin T.Y."/>
            <person name="Mechtler K."/>
            <person name="Meinhart A."/>
            <person name="Haselbach D."/>
            <person name="Pauli A."/>
        </authorList>
    </citation>
    <scope>STRUCTURE BY ELECTRON MICROSCOPY (2.30 ANGSTROMS) OF RIBOSOME</scope>
    <scope>SUBUNIT</scope>
    <scope>SUBCELLULAR LOCATION</scope>
</reference>
<organism>
    <name type="scientific">Oryctolagus cuniculus</name>
    <name type="common">Rabbit</name>
    <dbReference type="NCBI Taxonomy" id="9986"/>
    <lineage>
        <taxon>Eukaryota</taxon>
        <taxon>Metazoa</taxon>
        <taxon>Chordata</taxon>
        <taxon>Craniata</taxon>
        <taxon>Vertebrata</taxon>
        <taxon>Euteleostomi</taxon>
        <taxon>Mammalia</taxon>
        <taxon>Eutheria</taxon>
        <taxon>Euarchontoglires</taxon>
        <taxon>Glires</taxon>
        <taxon>Lagomorpha</taxon>
        <taxon>Leporidae</taxon>
        <taxon>Oryctolagus</taxon>
    </lineage>
</organism>
<accession>G1TFM5</accession>
<evidence type="ECO:0000250" key="1">
    <source>
        <dbReference type="UniProtKB" id="P46782"/>
    </source>
</evidence>
<evidence type="ECO:0000269" key="2">
    <source>
    </source>
</evidence>
<evidence type="ECO:0000269" key="3">
    <source>
    </source>
</evidence>
<evidence type="ECO:0000269" key="4">
    <source>
    </source>
</evidence>
<evidence type="ECO:0000269" key="5">
    <source>
    </source>
</evidence>
<evidence type="ECO:0000269" key="6">
    <source>
    </source>
</evidence>
<evidence type="ECO:0000269" key="7">
    <source>
    </source>
</evidence>
<evidence type="ECO:0000269" key="8">
    <source>
    </source>
</evidence>
<evidence type="ECO:0000269" key="9">
    <source>
    </source>
</evidence>
<evidence type="ECO:0000269" key="10">
    <source>
    </source>
</evidence>
<evidence type="ECO:0000269" key="11">
    <source>
    </source>
</evidence>
<evidence type="ECO:0000269" key="12">
    <source>
    </source>
</evidence>
<evidence type="ECO:0000269" key="13">
    <source>
    </source>
</evidence>
<evidence type="ECO:0000269" key="14">
    <source>
    </source>
</evidence>
<evidence type="ECO:0000305" key="15"/>
<evidence type="ECO:0007744" key="16">
    <source>
        <dbReference type="PDB" id="3JAG"/>
    </source>
</evidence>
<evidence type="ECO:0007744" key="17">
    <source>
        <dbReference type="PDB" id="3JAH"/>
    </source>
</evidence>
<evidence type="ECO:0007744" key="18">
    <source>
        <dbReference type="PDB" id="4D5L"/>
    </source>
</evidence>
<evidence type="ECO:0007744" key="19">
    <source>
        <dbReference type="PDB" id="4D61"/>
    </source>
</evidence>
<evidence type="ECO:0007744" key="20">
    <source>
        <dbReference type="PDB" id="4KZX"/>
    </source>
</evidence>
<evidence type="ECO:0007744" key="21">
    <source>
        <dbReference type="PDB" id="4KZY"/>
    </source>
</evidence>
<evidence type="ECO:0007744" key="22">
    <source>
        <dbReference type="PDB" id="5LZS"/>
    </source>
</evidence>
<evidence type="ECO:0007744" key="23">
    <source>
        <dbReference type="PDB" id="5LZT"/>
    </source>
</evidence>
<evidence type="ECO:0007744" key="24">
    <source>
        <dbReference type="PDB" id="6D90"/>
    </source>
</evidence>
<evidence type="ECO:0007744" key="25">
    <source>
        <dbReference type="PDB" id="6D9J"/>
    </source>
</evidence>
<evidence type="ECO:0007744" key="26">
    <source>
        <dbReference type="PDB" id="6GZ3"/>
    </source>
</evidence>
<evidence type="ECO:0007744" key="27">
    <source>
        <dbReference type="PDB" id="6HCF"/>
    </source>
</evidence>
<evidence type="ECO:0007744" key="28">
    <source>
        <dbReference type="PDB" id="6HCJ"/>
    </source>
</evidence>
<evidence type="ECO:0007744" key="29">
    <source>
        <dbReference type="PDB" id="6MTB"/>
    </source>
</evidence>
<evidence type="ECO:0007744" key="30">
    <source>
        <dbReference type="PDB" id="6MTC"/>
    </source>
</evidence>
<evidence type="ECO:0007744" key="31">
    <source>
        <dbReference type="PDB" id="6P4G"/>
    </source>
</evidence>
<evidence type="ECO:0007744" key="32">
    <source>
        <dbReference type="PDB" id="6P4H"/>
    </source>
</evidence>
<evidence type="ECO:0007744" key="33">
    <source>
        <dbReference type="PDB" id="6R5Q"/>
    </source>
</evidence>
<evidence type="ECO:0007744" key="34">
    <source>
        <dbReference type="PDB" id="6R6G"/>
    </source>
</evidence>
<evidence type="ECO:0007744" key="35">
    <source>
        <dbReference type="PDB" id="6SGC"/>
    </source>
</evidence>
<evidence type="ECO:0007744" key="36">
    <source>
        <dbReference type="PDB" id="6W2S"/>
    </source>
</evidence>
<evidence type="ECO:0007744" key="37">
    <source>
        <dbReference type="PDB" id="6W2T"/>
    </source>
</evidence>
<evidence type="ECO:0007744" key="38">
    <source>
        <dbReference type="PDB" id="7OYD"/>
    </source>
</evidence>
<evidence type="ECO:0007829" key="39">
    <source>
        <dbReference type="PDB" id="6P4G"/>
    </source>
</evidence>
<evidence type="ECO:0007829" key="40">
    <source>
        <dbReference type="PDB" id="6YAN"/>
    </source>
</evidence>
<evidence type="ECO:0007829" key="41">
    <source>
        <dbReference type="PDB" id="7JQB"/>
    </source>
</evidence>
<dbReference type="RefSeq" id="XP_002721942.1">
    <property type="nucleotide sequence ID" value="XM_002721896.5"/>
</dbReference>
<dbReference type="PDB" id="3JAG">
    <property type="method" value="EM"/>
    <property type="resolution" value="3.65 A"/>
    <property type="chains" value="FF=14-204"/>
</dbReference>
<dbReference type="PDB" id="3JAH">
    <property type="method" value="EM"/>
    <property type="resolution" value="3.45 A"/>
    <property type="chains" value="FF=14-204"/>
</dbReference>
<dbReference type="PDB" id="3JAI">
    <property type="method" value="EM"/>
    <property type="resolution" value="3.65 A"/>
    <property type="chains" value="FF=14-204"/>
</dbReference>
<dbReference type="PDB" id="4D5L">
    <property type="method" value="EM"/>
    <property type="resolution" value="9.00 A"/>
    <property type="chains" value="F=1-204"/>
</dbReference>
<dbReference type="PDB" id="4D61">
    <property type="method" value="EM"/>
    <property type="resolution" value="9.00 A"/>
    <property type="chains" value="F=1-204"/>
</dbReference>
<dbReference type="PDB" id="4KZX">
    <property type="method" value="X-ray"/>
    <property type="resolution" value="7.81 A"/>
    <property type="chains" value="F=1-204"/>
</dbReference>
<dbReference type="PDB" id="4KZY">
    <property type="method" value="X-ray"/>
    <property type="resolution" value="7.01 A"/>
    <property type="chains" value="F=1-204"/>
</dbReference>
<dbReference type="PDB" id="4KZZ">
    <property type="method" value="X-ray"/>
    <property type="resolution" value="7.03 A"/>
    <property type="chains" value="F=1-204"/>
</dbReference>
<dbReference type="PDB" id="5LZS">
    <property type="method" value="EM"/>
    <property type="resolution" value="3.31 A"/>
    <property type="chains" value="FF=1-204"/>
</dbReference>
<dbReference type="PDB" id="5LZT">
    <property type="method" value="EM"/>
    <property type="resolution" value="3.65 A"/>
    <property type="chains" value="FF=1-204"/>
</dbReference>
<dbReference type="PDB" id="5LZU">
    <property type="method" value="EM"/>
    <property type="resolution" value="3.75 A"/>
    <property type="chains" value="FF=1-204"/>
</dbReference>
<dbReference type="PDB" id="5LZV">
    <property type="method" value="EM"/>
    <property type="resolution" value="3.35 A"/>
    <property type="chains" value="FF=1-204"/>
</dbReference>
<dbReference type="PDB" id="5LZW">
    <property type="method" value="EM"/>
    <property type="resolution" value="3.53 A"/>
    <property type="chains" value="FF=1-204"/>
</dbReference>
<dbReference type="PDB" id="5LZX">
    <property type="method" value="EM"/>
    <property type="resolution" value="3.67 A"/>
    <property type="chains" value="FF=1-204"/>
</dbReference>
<dbReference type="PDB" id="5LZY">
    <property type="method" value="EM"/>
    <property type="resolution" value="3.99 A"/>
    <property type="chains" value="FF=1-204"/>
</dbReference>
<dbReference type="PDB" id="5LZZ">
    <property type="method" value="EM"/>
    <property type="resolution" value="3.47 A"/>
    <property type="chains" value="FF=1-204"/>
</dbReference>
<dbReference type="PDB" id="6D90">
    <property type="method" value="EM"/>
    <property type="resolution" value="3.20 A"/>
    <property type="chains" value="GG=1-204"/>
</dbReference>
<dbReference type="PDB" id="6D9J">
    <property type="method" value="EM"/>
    <property type="resolution" value="3.20 A"/>
    <property type="chains" value="GG=1-204"/>
</dbReference>
<dbReference type="PDB" id="6GZ3">
    <property type="method" value="EM"/>
    <property type="resolution" value="3.60 A"/>
    <property type="chains" value="BF=15-204"/>
</dbReference>
<dbReference type="PDB" id="6HCF">
    <property type="method" value="EM"/>
    <property type="resolution" value="3.90 A"/>
    <property type="chains" value="G1=1-204"/>
</dbReference>
<dbReference type="PDB" id="6HCJ">
    <property type="method" value="EM"/>
    <property type="resolution" value="3.80 A"/>
    <property type="chains" value="G2=1-204"/>
</dbReference>
<dbReference type="PDB" id="6HCM">
    <property type="method" value="EM"/>
    <property type="resolution" value="6.80 A"/>
    <property type="chains" value="G1=1-204"/>
</dbReference>
<dbReference type="PDB" id="6HCQ">
    <property type="method" value="EM"/>
    <property type="resolution" value="6.50 A"/>
    <property type="chains" value="G2=1-204"/>
</dbReference>
<dbReference type="PDB" id="6MTB">
    <property type="method" value="EM"/>
    <property type="resolution" value="3.60 A"/>
    <property type="chains" value="FF=1-204"/>
</dbReference>
<dbReference type="PDB" id="6MTC">
    <property type="method" value="EM"/>
    <property type="resolution" value="3.40 A"/>
    <property type="chains" value="FF=1-204"/>
</dbReference>
<dbReference type="PDB" id="6MTD">
    <property type="method" value="EM"/>
    <property type="resolution" value="3.30 A"/>
    <property type="chains" value="FF=1-204"/>
</dbReference>
<dbReference type="PDB" id="6MTE">
    <property type="method" value="EM"/>
    <property type="resolution" value="3.40 A"/>
    <property type="chains" value="FF=1-204"/>
</dbReference>
<dbReference type="PDB" id="6P4G">
    <property type="method" value="EM"/>
    <property type="resolution" value="3.10 A"/>
    <property type="chains" value="G=1-204"/>
</dbReference>
<dbReference type="PDB" id="6P4H">
    <property type="method" value="EM"/>
    <property type="resolution" value="3.20 A"/>
    <property type="chains" value="G=1-204"/>
</dbReference>
<dbReference type="PDB" id="6P5I">
    <property type="method" value="EM"/>
    <property type="resolution" value="3.10 A"/>
    <property type="chains" value="G=1-204"/>
</dbReference>
<dbReference type="PDB" id="6P5J">
    <property type="method" value="EM"/>
    <property type="resolution" value="3.10 A"/>
    <property type="chains" value="G=1-204"/>
</dbReference>
<dbReference type="PDB" id="6P5K">
    <property type="method" value="EM"/>
    <property type="resolution" value="3.10 A"/>
    <property type="chains" value="G=1-204"/>
</dbReference>
<dbReference type="PDB" id="6P5N">
    <property type="method" value="EM"/>
    <property type="resolution" value="3.20 A"/>
    <property type="chains" value="G=1-204"/>
</dbReference>
<dbReference type="PDB" id="6R5Q">
    <property type="method" value="EM"/>
    <property type="resolution" value="3.00 A"/>
    <property type="chains" value="y=14-204"/>
</dbReference>
<dbReference type="PDB" id="6R6G">
    <property type="method" value="EM"/>
    <property type="resolution" value="3.70 A"/>
    <property type="chains" value="y=14-204"/>
</dbReference>
<dbReference type="PDB" id="6R6P">
    <property type="method" value="EM"/>
    <property type="resolution" value="3.10 A"/>
    <property type="chains" value="BB=14-204"/>
</dbReference>
<dbReference type="PDB" id="6R7Q">
    <property type="method" value="EM"/>
    <property type="resolution" value="3.90 A"/>
    <property type="chains" value="y=14-204"/>
</dbReference>
<dbReference type="PDB" id="6SGC">
    <property type="method" value="EM"/>
    <property type="resolution" value="2.80 A"/>
    <property type="chains" value="G1=1-204"/>
</dbReference>
<dbReference type="PDB" id="6W2S">
    <property type="method" value="EM"/>
    <property type="resolution" value="3.00 A"/>
    <property type="chains" value="G=1-204"/>
</dbReference>
<dbReference type="PDB" id="6W2T">
    <property type="method" value="EM"/>
    <property type="resolution" value="3.36 A"/>
    <property type="chains" value="G=1-204"/>
</dbReference>
<dbReference type="PDB" id="6YAN">
    <property type="method" value="EM"/>
    <property type="resolution" value="3.48 A"/>
    <property type="chains" value="H=14-204"/>
</dbReference>
<dbReference type="PDB" id="7JQB">
    <property type="method" value="EM"/>
    <property type="resolution" value="2.70 A"/>
    <property type="chains" value="G=1-204"/>
</dbReference>
<dbReference type="PDB" id="7JQC">
    <property type="method" value="EM"/>
    <property type="resolution" value="3.30 A"/>
    <property type="chains" value="G=1-204"/>
</dbReference>
<dbReference type="PDB" id="7MDZ">
    <property type="method" value="EM"/>
    <property type="resolution" value="3.20 A"/>
    <property type="chains" value="FF=1-204"/>
</dbReference>
<dbReference type="PDB" id="7NWG">
    <property type="method" value="EM"/>
    <property type="resolution" value="3.80 A"/>
    <property type="chains" value="G2=1-204"/>
</dbReference>
<dbReference type="PDB" id="7NWH">
    <property type="method" value="EM"/>
    <property type="resolution" value="4.10 A"/>
    <property type="chains" value="FF=1-204"/>
</dbReference>
<dbReference type="PDB" id="7NWI">
    <property type="method" value="EM"/>
    <property type="resolution" value="3.13 A"/>
    <property type="chains" value="FF=1-204"/>
</dbReference>
<dbReference type="PDB" id="7O7Y">
    <property type="method" value="EM"/>
    <property type="resolution" value="2.20 A"/>
    <property type="chains" value="Ae=1-204"/>
</dbReference>
<dbReference type="PDB" id="7O7Z">
    <property type="method" value="EM"/>
    <property type="resolution" value="2.40 A"/>
    <property type="chains" value="Ae=1-204"/>
</dbReference>
<dbReference type="PDB" id="7O80">
    <property type="method" value="EM"/>
    <property type="resolution" value="2.90 A"/>
    <property type="chains" value="Ae=1-204"/>
</dbReference>
<dbReference type="PDB" id="7O81">
    <property type="method" value="EM"/>
    <property type="resolution" value="3.10 A"/>
    <property type="chains" value="Ae=1-204"/>
</dbReference>
<dbReference type="PDB" id="7OYD">
    <property type="method" value="EM"/>
    <property type="resolution" value="2.30 A"/>
    <property type="chains" value="FF=1-204"/>
</dbReference>
<dbReference type="PDB" id="7SYG">
    <property type="method" value="EM"/>
    <property type="resolution" value="4.30 A"/>
    <property type="chains" value="G=1-204"/>
</dbReference>
<dbReference type="PDB" id="7SYH">
    <property type="method" value="EM"/>
    <property type="resolution" value="4.60 A"/>
    <property type="chains" value="G=1-204"/>
</dbReference>
<dbReference type="PDB" id="7SYI">
    <property type="method" value="EM"/>
    <property type="resolution" value="4.50 A"/>
    <property type="chains" value="G=1-204"/>
</dbReference>
<dbReference type="PDB" id="7SYJ">
    <property type="method" value="EM"/>
    <property type="resolution" value="4.80 A"/>
    <property type="chains" value="G=1-204"/>
</dbReference>
<dbReference type="PDB" id="7SYK">
    <property type="method" value="EM"/>
    <property type="resolution" value="4.20 A"/>
    <property type="chains" value="G=1-204"/>
</dbReference>
<dbReference type="PDB" id="7SYL">
    <property type="method" value="EM"/>
    <property type="resolution" value="4.50 A"/>
    <property type="chains" value="G=1-204"/>
</dbReference>
<dbReference type="PDB" id="7SYM">
    <property type="method" value="EM"/>
    <property type="resolution" value="4.80 A"/>
    <property type="chains" value="G=1-204"/>
</dbReference>
<dbReference type="PDB" id="7SYN">
    <property type="method" value="EM"/>
    <property type="resolution" value="4.00 A"/>
    <property type="chains" value="G=1-204"/>
</dbReference>
<dbReference type="PDB" id="7SYO">
    <property type="method" value="EM"/>
    <property type="resolution" value="4.60 A"/>
    <property type="chains" value="G=1-204"/>
</dbReference>
<dbReference type="PDB" id="7SYP">
    <property type="method" value="EM"/>
    <property type="resolution" value="4.00 A"/>
    <property type="chains" value="G=1-204"/>
</dbReference>
<dbReference type="PDB" id="7SYQ">
    <property type="method" value="EM"/>
    <property type="resolution" value="3.80 A"/>
    <property type="chains" value="G=1-204"/>
</dbReference>
<dbReference type="PDB" id="7SYR">
    <property type="method" value="EM"/>
    <property type="resolution" value="3.60 A"/>
    <property type="chains" value="G=1-204"/>
</dbReference>
<dbReference type="PDB" id="7SYS">
    <property type="method" value="EM"/>
    <property type="resolution" value="3.50 A"/>
    <property type="chains" value="G=1-204"/>
</dbReference>
<dbReference type="PDB" id="7SYT">
    <property type="method" value="EM"/>
    <property type="resolution" value="4.40 A"/>
    <property type="chains" value="G=1-204"/>
</dbReference>
<dbReference type="PDB" id="7SYU">
    <property type="method" value="EM"/>
    <property type="resolution" value="4.60 A"/>
    <property type="chains" value="G=1-204"/>
</dbReference>
<dbReference type="PDB" id="7SYV">
    <property type="method" value="EM"/>
    <property type="resolution" value="3.90 A"/>
    <property type="chains" value="G=1-204"/>
</dbReference>
<dbReference type="PDB" id="7SYW">
    <property type="method" value="EM"/>
    <property type="resolution" value="3.70 A"/>
    <property type="chains" value="G=1-204"/>
</dbReference>
<dbReference type="PDB" id="7SYX">
    <property type="method" value="EM"/>
    <property type="resolution" value="3.70 A"/>
    <property type="chains" value="G=1-204"/>
</dbReference>
<dbReference type="PDB" id="7TOQ">
    <property type="method" value="EM"/>
    <property type="resolution" value="3.10 A"/>
    <property type="chains" value="AS05=14-204"/>
</dbReference>
<dbReference type="PDB" id="7TOR">
    <property type="method" value="EM"/>
    <property type="resolution" value="2.90 A"/>
    <property type="chains" value="AS05=14-204"/>
</dbReference>
<dbReference type="PDB" id="7UCJ">
    <property type="method" value="EM"/>
    <property type="resolution" value="3.10 A"/>
    <property type="chains" value="FF=14-204"/>
</dbReference>
<dbReference type="PDB" id="7UCK">
    <property type="method" value="EM"/>
    <property type="resolution" value="2.80 A"/>
    <property type="chains" value="FF=14-204"/>
</dbReference>
<dbReference type="PDB" id="8BHF">
    <property type="method" value="EM"/>
    <property type="resolution" value="3.10 A"/>
    <property type="chains" value="G3=14-204"/>
</dbReference>
<dbReference type="PDB" id="8BTK">
    <property type="method" value="EM"/>
    <property type="resolution" value="3.50 A"/>
    <property type="chains" value="Ae=1-204"/>
</dbReference>
<dbReference type="PDB" id="8P2K">
    <property type="method" value="EM"/>
    <property type="resolution" value="2.90 A"/>
    <property type="chains" value="Ae=1-204"/>
</dbReference>
<dbReference type="PDB" id="8Q7Z">
    <property type="method" value="EM"/>
    <property type="resolution" value="2.50 A"/>
    <property type="chains" value="Ae=1-204"/>
</dbReference>
<dbReference type="PDB" id="8Q87">
    <property type="method" value="EM"/>
    <property type="resolution" value="2.40 A"/>
    <property type="chains" value="Ae=1-204"/>
</dbReference>
<dbReference type="PDB" id="8SCB">
    <property type="method" value="EM"/>
    <property type="resolution" value="2.50 A"/>
    <property type="chains" value="FF=1-204"/>
</dbReference>
<dbReference type="PDB" id="8VFT">
    <property type="method" value="EM"/>
    <property type="resolution" value="3.30 A"/>
    <property type="chains" value="FF=1-204"/>
</dbReference>
<dbReference type="PDB" id="9BDL">
    <property type="method" value="EM"/>
    <property type="resolution" value="2.80 A"/>
    <property type="chains" value="AS05=14-204"/>
</dbReference>
<dbReference type="PDB" id="9BDN">
    <property type="method" value="EM"/>
    <property type="resolution" value="3.10 A"/>
    <property type="chains" value="AS05=14-204"/>
</dbReference>
<dbReference type="PDB" id="9BDP">
    <property type="method" value="EM"/>
    <property type="resolution" value="3.70 A"/>
    <property type="chains" value="AS05=14-204"/>
</dbReference>
<dbReference type="PDB" id="9C8K">
    <property type="method" value="EM"/>
    <property type="resolution" value="3.10 A"/>
    <property type="chains" value="F=1-204"/>
</dbReference>
<dbReference type="PDB" id="9F1B">
    <property type="method" value="EM"/>
    <property type="resolution" value="3.01 A"/>
    <property type="chains" value="Ae=1-204"/>
</dbReference>
<dbReference type="PDB" id="9F1C">
    <property type="method" value="EM"/>
    <property type="resolution" value="3.78 A"/>
    <property type="chains" value="Ae=1-204"/>
</dbReference>
<dbReference type="PDB" id="9F1D">
    <property type="method" value="EM"/>
    <property type="resolution" value="3.26 A"/>
    <property type="chains" value="Ae=1-204"/>
</dbReference>
<dbReference type="PDBsum" id="3JAG"/>
<dbReference type="PDBsum" id="3JAH"/>
<dbReference type="PDBsum" id="3JAI"/>
<dbReference type="PDBsum" id="4D5L"/>
<dbReference type="PDBsum" id="4D61"/>
<dbReference type="PDBsum" id="4KZX"/>
<dbReference type="PDBsum" id="4KZY"/>
<dbReference type="PDBsum" id="4KZZ"/>
<dbReference type="PDBsum" id="5LZS"/>
<dbReference type="PDBsum" id="5LZT"/>
<dbReference type="PDBsum" id="5LZU"/>
<dbReference type="PDBsum" id="5LZV"/>
<dbReference type="PDBsum" id="5LZW"/>
<dbReference type="PDBsum" id="5LZX"/>
<dbReference type="PDBsum" id="5LZY"/>
<dbReference type="PDBsum" id="5LZZ"/>
<dbReference type="PDBsum" id="6D90"/>
<dbReference type="PDBsum" id="6D9J"/>
<dbReference type="PDBsum" id="6GZ3"/>
<dbReference type="PDBsum" id="6HCF"/>
<dbReference type="PDBsum" id="6HCJ"/>
<dbReference type="PDBsum" id="6HCM"/>
<dbReference type="PDBsum" id="6HCQ"/>
<dbReference type="PDBsum" id="6MTB"/>
<dbReference type="PDBsum" id="6MTC"/>
<dbReference type="PDBsum" id="6MTD"/>
<dbReference type="PDBsum" id="6MTE"/>
<dbReference type="PDBsum" id="6P4G"/>
<dbReference type="PDBsum" id="6P4H"/>
<dbReference type="PDBsum" id="6P5I"/>
<dbReference type="PDBsum" id="6P5J"/>
<dbReference type="PDBsum" id="6P5K"/>
<dbReference type="PDBsum" id="6P5N"/>
<dbReference type="PDBsum" id="6R5Q"/>
<dbReference type="PDBsum" id="6R6G"/>
<dbReference type="PDBsum" id="6R6P"/>
<dbReference type="PDBsum" id="6R7Q"/>
<dbReference type="PDBsum" id="6SGC"/>
<dbReference type="PDBsum" id="6W2S"/>
<dbReference type="PDBsum" id="6W2T"/>
<dbReference type="PDBsum" id="6YAN"/>
<dbReference type="PDBsum" id="7JQB"/>
<dbReference type="PDBsum" id="7JQC"/>
<dbReference type="PDBsum" id="7MDZ"/>
<dbReference type="PDBsum" id="7NWG"/>
<dbReference type="PDBsum" id="7NWH"/>
<dbReference type="PDBsum" id="7NWI"/>
<dbReference type="PDBsum" id="7O7Y"/>
<dbReference type="PDBsum" id="7O7Z"/>
<dbReference type="PDBsum" id="7O80"/>
<dbReference type="PDBsum" id="7O81"/>
<dbReference type="PDBsum" id="7OYD"/>
<dbReference type="PDBsum" id="7SYG"/>
<dbReference type="PDBsum" id="7SYH"/>
<dbReference type="PDBsum" id="7SYI"/>
<dbReference type="PDBsum" id="7SYJ"/>
<dbReference type="PDBsum" id="7SYK"/>
<dbReference type="PDBsum" id="7SYL"/>
<dbReference type="PDBsum" id="7SYM"/>
<dbReference type="PDBsum" id="7SYN"/>
<dbReference type="PDBsum" id="7SYO"/>
<dbReference type="PDBsum" id="7SYP"/>
<dbReference type="PDBsum" id="7SYQ"/>
<dbReference type="PDBsum" id="7SYR"/>
<dbReference type="PDBsum" id="7SYS"/>
<dbReference type="PDBsum" id="7SYT"/>
<dbReference type="PDBsum" id="7SYU"/>
<dbReference type="PDBsum" id="7SYV"/>
<dbReference type="PDBsum" id="7SYW"/>
<dbReference type="PDBsum" id="7SYX"/>
<dbReference type="PDBsum" id="7TOQ"/>
<dbReference type="PDBsum" id="7TOR"/>
<dbReference type="PDBsum" id="7UCJ"/>
<dbReference type="PDBsum" id="7UCK"/>
<dbReference type="PDBsum" id="8BHF"/>
<dbReference type="PDBsum" id="8BTK"/>
<dbReference type="PDBsum" id="8P2K"/>
<dbReference type="PDBsum" id="8Q7Z"/>
<dbReference type="PDBsum" id="8Q87"/>
<dbReference type="PDBsum" id="8SCB"/>
<dbReference type="PDBsum" id="8VFT"/>
<dbReference type="PDBsum" id="9BDL"/>
<dbReference type="PDBsum" id="9BDN"/>
<dbReference type="PDBsum" id="9BDP"/>
<dbReference type="PDBsum" id="9C8K"/>
<dbReference type="PDBsum" id="9F1B"/>
<dbReference type="PDBsum" id="9F1C"/>
<dbReference type="PDBsum" id="9F1D"/>
<dbReference type="EMDB" id="EMD-0098"/>
<dbReference type="EMDB" id="EMD-0099"/>
<dbReference type="EMDB" id="EMD-0100"/>
<dbReference type="EMDB" id="EMD-0192"/>
<dbReference type="EMDB" id="EMD-0194"/>
<dbReference type="EMDB" id="EMD-0195"/>
<dbReference type="EMDB" id="EMD-0197"/>
<dbReference type="EMDB" id="EMD-10181"/>
<dbReference type="EMDB" id="EMD-10762"/>
<dbReference type="EMDB" id="EMD-12631"/>
<dbReference type="EMDB" id="EMD-12632"/>
<dbReference type="EMDB" id="EMD-12633"/>
<dbReference type="EMDB" id="EMD-12756"/>
<dbReference type="EMDB" id="EMD-12757"/>
<dbReference type="EMDB" id="EMD-12758"/>
<dbReference type="EMDB" id="EMD-12759"/>
<dbReference type="EMDB" id="EMD-13114"/>
<dbReference type="EMDB" id="EMD-16052"/>
<dbReference type="EMDB" id="EMD-16232"/>
<dbReference type="EMDB" id="EMD-17367"/>
<dbReference type="EMDB" id="EMD-20248"/>
<dbReference type="EMDB" id="EMD-20249"/>
<dbReference type="EMDB" id="EMD-20255"/>
<dbReference type="EMDB" id="EMD-20256"/>
<dbReference type="EMDB" id="EMD-20257"/>
<dbReference type="EMDB" id="EMD-20258"/>
<dbReference type="EMDB" id="EMD-21529"/>
<dbReference type="EMDB" id="EMD-21530"/>
<dbReference type="EMDB" id="EMD-22432"/>
<dbReference type="EMDB" id="EMD-22433"/>
<dbReference type="EMDB" id="EMD-23785"/>
<dbReference type="EMDB" id="EMD-25527"/>
<dbReference type="EMDB" id="EMD-25528"/>
<dbReference type="EMDB" id="EMD-25529"/>
<dbReference type="EMDB" id="EMD-25530"/>
<dbReference type="EMDB" id="EMD-25531"/>
<dbReference type="EMDB" id="EMD-25532"/>
<dbReference type="EMDB" id="EMD-25533"/>
<dbReference type="EMDB" id="EMD-25534"/>
<dbReference type="EMDB" id="EMD-25535"/>
<dbReference type="EMDB" id="EMD-25536"/>
<dbReference type="EMDB" id="EMD-25537"/>
<dbReference type="EMDB" id="EMD-25538"/>
<dbReference type="EMDB" id="EMD-25539"/>
<dbReference type="EMDB" id="EMD-25540"/>
<dbReference type="EMDB" id="EMD-25541"/>
<dbReference type="EMDB" id="EMD-25542"/>
<dbReference type="EMDB" id="EMD-25543"/>
<dbReference type="EMDB" id="EMD-25544"/>
<dbReference type="EMDB" id="EMD-26035"/>
<dbReference type="EMDB" id="EMD-26036"/>
<dbReference type="EMDB" id="EMD-26444"/>
<dbReference type="EMDB" id="EMD-26445"/>
<dbReference type="EMDB" id="EMD-40344"/>
<dbReference type="EMDB" id="EMD-4130"/>
<dbReference type="EMDB" id="EMD-4131"/>
<dbReference type="EMDB" id="EMD-4132"/>
<dbReference type="EMDB" id="EMD-4133"/>
<dbReference type="EMDB" id="EMD-4134"/>
<dbReference type="EMDB" id="EMD-4135"/>
<dbReference type="EMDB" id="EMD-4136"/>
<dbReference type="EMDB" id="EMD-4137"/>
<dbReference type="EMDB" id="EMD-43189"/>
<dbReference type="EMDB" id="EMD-44461"/>
<dbReference type="EMDB" id="EMD-44463"/>
<dbReference type="EMDB" id="EMD-44464"/>
<dbReference type="EMDB" id="EMD-45307"/>
<dbReference type="EMDB" id="EMD-4729"/>
<dbReference type="EMDB" id="EMD-4735"/>
<dbReference type="EMDB" id="EMD-4737"/>
<dbReference type="EMDB" id="EMD-4745"/>
<dbReference type="EMDB" id="EMD-50124"/>
<dbReference type="EMDB" id="EMD-50125"/>
<dbReference type="EMDB" id="EMD-50126"/>
<dbReference type="EMDB" id="EMD-7834"/>
<dbReference type="EMDB" id="EMD-7836"/>
<dbReference type="EMDB" id="EMD-9237"/>
<dbReference type="EMDB" id="EMD-9239"/>
<dbReference type="EMDB" id="EMD-9240"/>
<dbReference type="EMDB" id="EMD-9242"/>
<dbReference type="SMR" id="G1TFM5"/>
<dbReference type="IntAct" id="G1TFM5">
    <property type="interactions" value="1"/>
</dbReference>
<dbReference type="Ensembl" id="ENSOCUT00000023676.1">
    <property type="protein sequence ID" value="ENSOCUP00000015718.1"/>
    <property type="gene ID" value="ENSOCUG00000024505.3"/>
</dbReference>
<dbReference type="GeneID" id="100340028"/>
<dbReference type="KEGG" id="ocu:100340028"/>
<dbReference type="CTD" id="6193"/>
<dbReference type="GeneTree" id="ENSGT00390000010806"/>
<dbReference type="HOGENOM" id="CLU_063975_0_0_1"/>
<dbReference type="OrthoDB" id="10264639at2759"/>
<dbReference type="TreeFam" id="TF300872"/>
<dbReference type="Proteomes" id="UP000001811">
    <property type="component" value="Unplaced"/>
</dbReference>
<dbReference type="Bgee" id="ENSOCUG00000024505">
    <property type="expression patterns" value="Expressed in upper lobe of left lung and 14 other cell types or tissues"/>
</dbReference>
<dbReference type="GO" id="GO:0022626">
    <property type="term" value="C:cytosolic ribosome"/>
    <property type="evidence" value="ECO:0000314"/>
    <property type="project" value="UniProtKB"/>
</dbReference>
<dbReference type="GO" id="GO:0005730">
    <property type="term" value="C:nucleolus"/>
    <property type="evidence" value="ECO:0007669"/>
    <property type="project" value="UniProtKB-SubCell"/>
</dbReference>
<dbReference type="GO" id="GO:0015935">
    <property type="term" value="C:small ribosomal subunit"/>
    <property type="evidence" value="ECO:0007669"/>
    <property type="project" value="InterPro"/>
</dbReference>
<dbReference type="GO" id="GO:0003723">
    <property type="term" value="F:RNA binding"/>
    <property type="evidence" value="ECO:0007669"/>
    <property type="project" value="InterPro"/>
</dbReference>
<dbReference type="GO" id="GO:0003735">
    <property type="term" value="F:structural constituent of ribosome"/>
    <property type="evidence" value="ECO:0000314"/>
    <property type="project" value="UniProtKB"/>
</dbReference>
<dbReference type="GO" id="GO:0006412">
    <property type="term" value="P:translation"/>
    <property type="evidence" value="ECO:0007669"/>
    <property type="project" value="InterPro"/>
</dbReference>
<dbReference type="CDD" id="cd14867">
    <property type="entry name" value="uS7_Eukaryote"/>
    <property type="match status" value="1"/>
</dbReference>
<dbReference type="FunFam" id="1.10.455.10:FF:000003">
    <property type="entry name" value="40S ribosomal protein S5"/>
    <property type="match status" value="1"/>
</dbReference>
<dbReference type="Gene3D" id="1.10.455.10">
    <property type="entry name" value="Ribosomal protein S7 domain"/>
    <property type="match status" value="1"/>
</dbReference>
<dbReference type="InterPro" id="IPR000235">
    <property type="entry name" value="Ribosomal_uS7"/>
</dbReference>
<dbReference type="InterPro" id="IPR020606">
    <property type="entry name" value="Ribosomal_uS7_CS"/>
</dbReference>
<dbReference type="InterPro" id="IPR023798">
    <property type="entry name" value="Ribosomal_uS7_dom"/>
</dbReference>
<dbReference type="InterPro" id="IPR036823">
    <property type="entry name" value="Ribosomal_uS7_dom_sf"/>
</dbReference>
<dbReference type="InterPro" id="IPR005716">
    <property type="entry name" value="Ribosomal_uS7_euk/arc"/>
</dbReference>
<dbReference type="NCBIfam" id="NF003106">
    <property type="entry name" value="PRK04027.1"/>
    <property type="match status" value="1"/>
</dbReference>
<dbReference type="NCBIfam" id="TIGR01028">
    <property type="entry name" value="uS7_euk_arch"/>
    <property type="match status" value="1"/>
</dbReference>
<dbReference type="PANTHER" id="PTHR11205">
    <property type="entry name" value="RIBOSOMAL PROTEIN S7"/>
    <property type="match status" value="1"/>
</dbReference>
<dbReference type="Pfam" id="PF00177">
    <property type="entry name" value="Ribosomal_S7"/>
    <property type="match status" value="1"/>
</dbReference>
<dbReference type="PIRSF" id="PIRSF002122">
    <property type="entry name" value="RPS7p_RPS7a_RPS5e_RPS7o"/>
    <property type="match status" value="1"/>
</dbReference>
<dbReference type="SUPFAM" id="SSF47973">
    <property type="entry name" value="Ribosomal protein S7"/>
    <property type="match status" value="1"/>
</dbReference>
<dbReference type="PROSITE" id="PS00052">
    <property type="entry name" value="RIBOSOMAL_S7"/>
    <property type="match status" value="1"/>
</dbReference>
<name>RS5_RABIT</name>
<proteinExistence type="evidence at protein level"/>
<sequence>MTEWETAAPAVAETPDIKLFGKWSTDDVQINDISLQDYIAVKEKYAKYLPHSAGRYAAKRFRKAQCPIVERLTNSMMMHGRNNGKKLMTVRIVKHAFEIIHLLTGENPLQVLVNAIINSGPREDSTRIGRAGTVRRQAVDVSPLRRVNQAIWLLCTGAREAAFRNIKTIAECLADELINAAKGSSNSYAIKKKDELERVAKSNR</sequence>
<gene>
    <name type="primary">RPS5</name>
</gene>